<evidence type="ECO:0000250" key="1"/>
<evidence type="ECO:0000256" key="2">
    <source>
        <dbReference type="SAM" id="MobiDB-lite"/>
    </source>
</evidence>
<evidence type="ECO:0000303" key="3">
    <source>
    </source>
</evidence>
<evidence type="ECO:0000305" key="4"/>
<organism>
    <name type="scientific">Arabidopsis thaliana</name>
    <name type="common">Mouse-ear cress</name>
    <dbReference type="NCBI Taxonomy" id="3702"/>
    <lineage>
        <taxon>Eukaryota</taxon>
        <taxon>Viridiplantae</taxon>
        <taxon>Streptophyta</taxon>
        <taxon>Embryophyta</taxon>
        <taxon>Tracheophyta</taxon>
        <taxon>Spermatophyta</taxon>
        <taxon>Magnoliopsida</taxon>
        <taxon>eudicotyledons</taxon>
        <taxon>Gunneridae</taxon>
        <taxon>Pentapetalae</taxon>
        <taxon>rosids</taxon>
        <taxon>malvids</taxon>
        <taxon>Brassicales</taxon>
        <taxon>Brassicaceae</taxon>
        <taxon>Camelineae</taxon>
        <taxon>Arabidopsis</taxon>
    </lineage>
</organism>
<reference key="1">
    <citation type="journal article" date="1997" name="DNA Res.">
        <title>Structural analysis of Arabidopsis thaliana chromosome 5. I. Sequence features of the 1.6 Mb regions covered by twenty physically assigned P1 clones.</title>
        <authorList>
            <person name="Sato S."/>
            <person name="Kotani H."/>
            <person name="Nakamura Y."/>
            <person name="Kaneko T."/>
            <person name="Asamizu E."/>
            <person name="Fukami M."/>
            <person name="Miyajima N."/>
            <person name="Tabata S."/>
        </authorList>
    </citation>
    <scope>NUCLEOTIDE SEQUENCE [LARGE SCALE GENOMIC DNA]</scope>
    <source>
        <strain>cv. Columbia</strain>
    </source>
</reference>
<reference key="2">
    <citation type="journal article" date="2017" name="Plant J.">
        <title>Araport11: a complete reannotation of the Arabidopsis thaliana reference genome.</title>
        <authorList>
            <person name="Cheng C.Y."/>
            <person name="Krishnakumar V."/>
            <person name="Chan A.P."/>
            <person name="Thibaud-Nissen F."/>
            <person name="Schobel S."/>
            <person name="Town C.D."/>
        </authorList>
    </citation>
    <scope>GENOME REANNOTATION</scope>
    <source>
        <strain>cv. Columbia</strain>
    </source>
</reference>
<reference key="3">
    <citation type="journal article" date="2003" name="Science">
        <title>Empirical analysis of transcriptional activity in the Arabidopsis genome.</title>
        <authorList>
            <person name="Yamada K."/>
            <person name="Lim J."/>
            <person name="Dale J.M."/>
            <person name="Chen H."/>
            <person name="Shinn P."/>
            <person name="Palm C.J."/>
            <person name="Southwick A.M."/>
            <person name="Wu H.C."/>
            <person name="Kim C.J."/>
            <person name="Nguyen M."/>
            <person name="Pham P.K."/>
            <person name="Cheuk R.F."/>
            <person name="Karlin-Newmann G."/>
            <person name="Liu S.X."/>
            <person name="Lam B."/>
            <person name="Sakano H."/>
            <person name="Wu T."/>
            <person name="Yu G."/>
            <person name="Miranda M."/>
            <person name="Quach H.L."/>
            <person name="Tripp M."/>
            <person name="Chang C.H."/>
            <person name="Lee J.M."/>
            <person name="Toriumi M.J."/>
            <person name="Chan M.M."/>
            <person name="Tang C.C."/>
            <person name="Onodera C.S."/>
            <person name="Deng J.M."/>
            <person name="Akiyama K."/>
            <person name="Ansari Y."/>
            <person name="Arakawa T."/>
            <person name="Banh J."/>
            <person name="Banno F."/>
            <person name="Bowser L."/>
            <person name="Brooks S.Y."/>
            <person name="Carninci P."/>
            <person name="Chao Q."/>
            <person name="Choy N."/>
            <person name="Enju A."/>
            <person name="Goldsmith A.D."/>
            <person name="Gurjal M."/>
            <person name="Hansen N.F."/>
            <person name="Hayashizaki Y."/>
            <person name="Johnson-Hopson C."/>
            <person name="Hsuan V.W."/>
            <person name="Iida K."/>
            <person name="Karnes M."/>
            <person name="Khan S."/>
            <person name="Koesema E."/>
            <person name="Ishida J."/>
            <person name="Jiang P.X."/>
            <person name="Jones T."/>
            <person name="Kawai J."/>
            <person name="Kamiya A."/>
            <person name="Meyers C."/>
            <person name="Nakajima M."/>
            <person name="Narusaka M."/>
            <person name="Seki M."/>
            <person name="Sakurai T."/>
            <person name="Satou M."/>
            <person name="Tamse R."/>
            <person name="Vaysberg M."/>
            <person name="Wallender E.K."/>
            <person name="Wong C."/>
            <person name="Yamamura Y."/>
            <person name="Yuan S."/>
            <person name="Shinozaki K."/>
            <person name="Davis R.W."/>
            <person name="Theologis A."/>
            <person name="Ecker J.R."/>
        </authorList>
    </citation>
    <scope>NUCLEOTIDE SEQUENCE [LARGE SCALE MRNA]</scope>
    <source>
        <strain>cv. Columbia</strain>
    </source>
</reference>
<reference key="4">
    <citation type="journal article" date="2001" name="Plant Physiol.">
        <title>The organization of cytoplasmic ribosomal protein genes in the Arabidopsis genome.</title>
        <authorList>
            <person name="Barakat A."/>
            <person name="Szick-Miranda K."/>
            <person name="Chang I.-F."/>
            <person name="Guyot R."/>
            <person name="Blanc G."/>
            <person name="Cooke R."/>
            <person name="Delseny M."/>
            <person name="Bailey-Serres J."/>
        </authorList>
    </citation>
    <scope>GENE FAMILY ORGANIZATION</scope>
    <scope>NOMENCLATURE</scope>
</reference>
<reference key="5">
    <citation type="journal article" date="2023" name="Plant Cell">
        <title>An updated nomenclature for plant ribosomal protein genes.</title>
        <authorList>
            <person name="Scarpin M.R."/>
            <person name="Busche M."/>
            <person name="Martinez R.E."/>
            <person name="Harper L.C."/>
            <person name="Reiser L."/>
            <person name="Szakonyi D."/>
            <person name="Merchante C."/>
            <person name="Lan T."/>
            <person name="Xiong W."/>
            <person name="Mo B."/>
            <person name="Tang G."/>
            <person name="Chen X."/>
            <person name="Bailey-Serres J."/>
            <person name="Browning K.S."/>
            <person name="Brunkard J.O."/>
        </authorList>
    </citation>
    <scope>NOMENCLATURE</scope>
</reference>
<gene>
    <name type="primary">RPS10B</name>
    <name type="ordered locus">At5g41520</name>
    <name type="ORF">MBK23.4</name>
</gene>
<proteinExistence type="evidence at transcript level"/>
<feature type="chain" id="PRO_0000116371" description="Small ribosomal subunit protein eS10y">
    <location>
        <begin position="1"/>
        <end position="180"/>
    </location>
</feature>
<feature type="region of interest" description="Disordered" evidence="2">
    <location>
        <begin position="92"/>
        <end position="180"/>
    </location>
</feature>
<feature type="compositionally biased region" description="Basic and acidic residues" evidence="2">
    <location>
        <begin position="108"/>
        <end position="128"/>
    </location>
</feature>
<feature type="compositionally biased region" description="Gly residues" evidence="2">
    <location>
        <begin position="152"/>
        <end position="180"/>
    </location>
</feature>
<comment type="subcellular location">
    <subcellularLocation>
        <location evidence="1">Cytoplasm</location>
    </subcellularLocation>
</comment>
<comment type="alternative products">
    <event type="alternative splicing"/>
    <isoform>
        <id>Q9FFS8-1</id>
        <name>1</name>
        <sequence type="displayed"/>
    </isoform>
    <text>A number of isoforms are produced. According to EST sequences.</text>
</comment>
<comment type="similarity">
    <text evidence="4">Belongs to the eukaryotic ribosomal protein eS10 family.</text>
</comment>
<name>RS102_ARATH</name>
<accession>Q9FFS8</accession>
<sequence>MIISETNRREISKYLFKEGVLFAKKDFNLPQHPLIESVPNLQVIKLMQSFKSKEYVRETFAWMHYYWFLTNEGIDFLRTYLNLPSEIVPATLKKQQKPLGRPFGGGGDRPRGPPRGDGERRFGDRDGYRGGPKSGGEYGDKAGAPADYQPGFRGGAGGARQGFGRGAGGFGGGAAGSDLP</sequence>
<keyword id="KW-0025">Alternative splicing</keyword>
<keyword id="KW-0963">Cytoplasm</keyword>
<keyword id="KW-1185">Reference proteome</keyword>
<keyword id="KW-0687">Ribonucleoprotein</keyword>
<keyword id="KW-0689">Ribosomal protein</keyword>
<protein>
    <recommendedName>
        <fullName evidence="3">Small ribosomal subunit protein eS10y</fullName>
    </recommendedName>
    <alternativeName>
        <fullName>40S ribosomal protein S10-2</fullName>
    </alternativeName>
</protein>
<dbReference type="EMBL" id="AB005233">
    <property type="protein sequence ID" value="BAB11458.1"/>
    <property type="molecule type" value="Genomic_DNA"/>
</dbReference>
<dbReference type="EMBL" id="CP002688">
    <property type="protein sequence ID" value="AED94687.1"/>
    <property type="molecule type" value="Genomic_DNA"/>
</dbReference>
<dbReference type="EMBL" id="AY037240">
    <property type="protein sequence ID" value="AAK59840.1"/>
    <property type="molecule type" value="mRNA"/>
</dbReference>
<dbReference type="EMBL" id="AF375440">
    <property type="protein sequence ID" value="AAK53024.1"/>
    <property type="molecule type" value="mRNA"/>
</dbReference>
<dbReference type="EMBL" id="AY060539">
    <property type="protein sequence ID" value="AAL31170.1"/>
    <property type="molecule type" value="mRNA"/>
</dbReference>
<dbReference type="RefSeq" id="NP_198967.1">
    <molecule id="Q9FFS8-1"/>
    <property type="nucleotide sequence ID" value="NM_123516.4"/>
</dbReference>
<dbReference type="SMR" id="Q9FFS8"/>
<dbReference type="BioGRID" id="19405">
    <property type="interactions" value="38"/>
</dbReference>
<dbReference type="FunCoup" id="Q9FFS8">
    <property type="interactions" value="3326"/>
</dbReference>
<dbReference type="IntAct" id="Q9FFS8">
    <property type="interactions" value="6"/>
</dbReference>
<dbReference type="STRING" id="3702.Q9FFS8"/>
<dbReference type="iPTMnet" id="Q9FFS8"/>
<dbReference type="PaxDb" id="3702-AT5G41520.1"/>
<dbReference type="ProteomicsDB" id="226749">
    <molecule id="Q9FFS8-1"/>
</dbReference>
<dbReference type="EnsemblPlants" id="AT5G41520.1">
    <molecule id="Q9FFS8-1"/>
    <property type="protein sequence ID" value="AT5G41520.1"/>
    <property type="gene ID" value="AT5G41520"/>
</dbReference>
<dbReference type="GeneID" id="834154"/>
<dbReference type="Gramene" id="AT5G41520.1">
    <molecule id="Q9FFS8-1"/>
    <property type="protein sequence ID" value="AT5G41520.1"/>
    <property type="gene ID" value="AT5G41520"/>
</dbReference>
<dbReference type="KEGG" id="ath:AT5G41520"/>
<dbReference type="Araport" id="AT5G41520"/>
<dbReference type="TAIR" id="AT5G41520">
    <property type="gene designation" value="RPS10B"/>
</dbReference>
<dbReference type="eggNOG" id="KOG3344">
    <property type="taxonomic scope" value="Eukaryota"/>
</dbReference>
<dbReference type="HOGENOM" id="CLU_089349_0_2_1"/>
<dbReference type="InParanoid" id="Q9FFS8"/>
<dbReference type="OMA" id="NWQHLYF"/>
<dbReference type="OrthoDB" id="5211809at2759"/>
<dbReference type="PhylomeDB" id="Q9FFS8"/>
<dbReference type="PRO" id="PR:Q9FFS8"/>
<dbReference type="Proteomes" id="UP000006548">
    <property type="component" value="Chromosome 5"/>
</dbReference>
<dbReference type="ExpressionAtlas" id="Q9FFS8">
    <property type="expression patterns" value="baseline and differential"/>
</dbReference>
<dbReference type="GO" id="GO:0009507">
    <property type="term" value="C:chloroplast"/>
    <property type="evidence" value="ECO:0007005"/>
    <property type="project" value="TAIR"/>
</dbReference>
<dbReference type="GO" id="GO:0022626">
    <property type="term" value="C:cytosolic ribosome"/>
    <property type="evidence" value="ECO:0007005"/>
    <property type="project" value="TAIR"/>
</dbReference>
<dbReference type="GO" id="GO:0022627">
    <property type="term" value="C:cytosolic small ribosomal subunit"/>
    <property type="evidence" value="ECO:0007005"/>
    <property type="project" value="TAIR"/>
</dbReference>
<dbReference type="GO" id="GO:0009505">
    <property type="term" value="C:plant-type cell wall"/>
    <property type="evidence" value="ECO:0007005"/>
    <property type="project" value="TAIR"/>
</dbReference>
<dbReference type="GO" id="GO:0009536">
    <property type="term" value="C:plastid"/>
    <property type="evidence" value="ECO:0007005"/>
    <property type="project" value="TAIR"/>
</dbReference>
<dbReference type="GO" id="GO:0003729">
    <property type="term" value="F:mRNA binding"/>
    <property type="evidence" value="ECO:0000314"/>
    <property type="project" value="TAIR"/>
</dbReference>
<dbReference type="GO" id="GO:0003735">
    <property type="term" value="F:structural constituent of ribosome"/>
    <property type="evidence" value="ECO:0000314"/>
    <property type="project" value="CAFA"/>
</dbReference>
<dbReference type="GO" id="GO:0090506">
    <property type="term" value="P:axillary shoot meristem initiation"/>
    <property type="evidence" value="ECO:0000316"/>
    <property type="project" value="TAIR"/>
</dbReference>
<dbReference type="GO" id="GO:2000032">
    <property type="term" value="P:regulation of secondary shoot formation"/>
    <property type="evidence" value="ECO:0000316"/>
    <property type="project" value="TAIR"/>
</dbReference>
<dbReference type="FunFam" id="1.10.10.10:FF:000025">
    <property type="entry name" value="40S ribosomal protein S10"/>
    <property type="match status" value="1"/>
</dbReference>
<dbReference type="Gene3D" id="1.10.10.10">
    <property type="entry name" value="Winged helix-like DNA-binding domain superfamily/Winged helix DNA-binding domain"/>
    <property type="match status" value="1"/>
</dbReference>
<dbReference type="InterPro" id="IPR005326">
    <property type="entry name" value="Plectin_eS10_N"/>
</dbReference>
<dbReference type="InterPro" id="IPR037447">
    <property type="entry name" value="Ribosomal_eS10"/>
</dbReference>
<dbReference type="InterPro" id="IPR036388">
    <property type="entry name" value="WH-like_DNA-bd_sf"/>
</dbReference>
<dbReference type="PANTHER" id="PTHR12146">
    <property type="entry name" value="40S RIBOSOMAL PROTEIN S10"/>
    <property type="match status" value="1"/>
</dbReference>
<dbReference type="PANTHER" id="PTHR12146:SF28">
    <property type="entry name" value="SMALL RIBOSOMAL SUBUNIT PROTEIN ES10Y"/>
    <property type="match status" value="1"/>
</dbReference>
<dbReference type="Pfam" id="PF03501">
    <property type="entry name" value="S10_plectin"/>
    <property type="match status" value="1"/>
</dbReference>